<comment type="function">
    <text evidence="1">Catalyzes the conversion of S-adenosyl-L-methionine (SAM) to carboxy-S-adenosyl-L-methionine (Cx-SAM).</text>
</comment>
<comment type="catalytic activity">
    <reaction evidence="1">
        <text>prephenate + S-adenosyl-L-methionine = carboxy-S-adenosyl-L-methionine + 3-phenylpyruvate + H2O</text>
        <dbReference type="Rhea" id="RHEA:51692"/>
        <dbReference type="ChEBI" id="CHEBI:15377"/>
        <dbReference type="ChEBI" id="CHEBI:18005"/>
        <dbReference type="ChEBI" id="CHEBI:29934"/>
        <dbReference type="ChEBI" id="CHEBI:59789"/>
        <dbReference type="ChEBI" id="CHEBI:134278"/>
    </reaction>
</comment>
<comment type="subunit">
    <text evidence="1">Homodimer.</text>
</comment>
<comment type="similarity">
    <text evidence="1">Belongs to the class I-like SAM-binding methyltransferase superfamily. Cx-SAM synthase family.</text>
</comment>
<accession>A5UAG5</accession>
<protein>
    <recommendedName>
        <fullName evidence="1">Carboxy-S-adenosyl-L-methionine synthase</fullName>
        <shortName evidence="1">Cx-SAM synthase</shortName>
        <ecNumber evidence="1">2.1.3.-</ecNumber>
    </recommendedName>
</protein>
<sequence>MVKDTLFSTPIAKLGDFIFDENVAEVFPDMIQRSVPGYSNIITAIGMLAERFVTADSNVYDLGCSRGAATLSARRNIHQPNVKIIGIDNSQPMVERCCQHIAAYHSEIPVEILCNDIRHVEIKNASMVILNFTLQFLPPEDRVALLIKIYEGLNPNGVLVLSEKFRFEDTKVNHLLIDLHHQFKRANGYSELEVSQKRTALENVMRTDSIETHKVRLKNIGFSQVELWFQCFNFGSMIAVK</sequence>
<feature type="chain" id="PRO_0000314334" description="Carboxy-S-adenosyl-L-methionine synthase">
    <location>
        <begin position="1"/>
        <end position="241"/>
    </location>
</feature>
<feature type="binding site" evidence="1">
    <location>
        <position position="38"/>
    </location>
    <ligand>
        <name>S-adenosyl-L-methionine</name>
        <dbReference type="ChEBI" id="CHEBI:59789"/>
    </ligand>
</feature>
<feature type="binding site" evidence="1">
    <location>
        <begin position="63"/>
        <end position="65"/>
    </location>
    <ligand>
        <name>S-adenosyl-L-methionine</name>
        <dbReference type="ChEBI" id="CHEBI:59789"/>
    </ligand>
</feature>
<feature type="binding site" evidence="1">
    <location>
        <begin position="88"/>
        <end position="89"/>
    </location>
    <ligand>
        <name>S-adenosyl-L-methionine</name>
        <dbReference type="ChEBI" id="CHEBI:59789"/>
    </ligand>
</feature>
<feature type="binding site" evidence="1">
    <location>
        <begin position="116"/>
        <end position="117"/>
    </location>
    <ligand>
        <name>S-adenosyl-L-methionine</name>
        <dbReference type="ChEBI" id="CHEBI:59789"/>
    </ligand>
</feature>
<feature type="binding site" evidence="1">
    <location>
        <position position="131"/>
    </location>
    <ligand>
        <name>S-adenosyl-L-methionine</name>
        <dbReference type="ChEBI" id="CHEBI:59789"/>
    </ligand>
</feature>
<feature type="binding site" evidence="1">
    <location>
        <position position="198"/>
    </location>
    <ligand>
        <name>S-adenosyl-L-methionine</name>
        <dbReference type="ChEBI" id="CHEBI:59789"/>
    </ligand>
</feature>
<proteinExistence type="inferred from homology"/>
<organism>
    <name type="scientific">Haemophilus influenzae (strain PittEE)</name>
    <dbReference type="NCBI Taxonomy" id="374930"/>
    <lineage>
        <taxon>Bacteria</taxon>
        <taxon>Pseudomonadati</taxon>
        <taxon>Pseudomonadota</taxon>
        <taxon>Gammaproteobacteria</taxon>
        <taxon>Pasteurellales</taxon>
        <taxon>Pasteurellaceae</taxon>
        <taxon>Haemophilus</taxon>
    </lineage>
</organism>
<dbReference type="EC" id="2.1.3.-" evidence="1"/>
<dbReference type="EMBL" id="CP000671">
    <property type="protein sequence ID" value="ABQ97766.1"/>
    <property type="molecule type" value="Genomic_DNA"/>
</dbReference>
<dbReference type="SMR" id="A5UAG5"/>
<dbReference type="KEGG" id="hip:CGSHiEE_01430"/>
<dbReference type="HOGENOM" id="CLU_078475_0_0_6"/>
<dbReference type="GO" id="GO:0016743">
    <property type="term" value="F:carboxyl- or carbamoyltransferase activity"/>
    <property type="evidence" value="ECO:0007669"/>
    <property type="project" value="UniProtKB-UniRule"/>
</dbReference>
<dbReference type="GO" id="GO:1904047">
    <property type="term" value="F:S-adenosyl-L-methionine binding"/>
    <property type="evidence" value="ECO:0007669"/>
    <property type="project" value="UniProtKB-UniRule"/>
</dbReference>
<dbReference type="GO" id="GO:0002098">
    <property type="term" value="P:tRNA wobble uridine modification"/>
    <property type="evidence" value="ECO:0007669"/>
    <property type="project" value="InterPro"/>
</dbReference>
<dbReference type="CDD" id="cd02440">
    <property type="entry name" value="AdoMet_MTases"/>
    <property type="match status" value="1"/>
</dbReference>
<dbReference type="Gene3D" id="3.40.50.150">
    <property type="entry name" value="Vaccinia Virus protein VP39"/>
    <property type="match status" value="1"/>
</dbReference>
<dbReference type="HAMAP" id="MF_01589">
    <property type="entry name" value="Cx_SAM_synthase"/>
    <property type="match status" value="1"/>
</dbReference>
<dbReference type="InterPro" id="IPR005271">
    <property type="entry name" value="CmoA"/>
</dbReference>
<dbReference type="InterPro" id="IPR041698">
    <property type="entry name" value="Methyltransf_25"/>
</dbReference>
<dbReference type="InterPro" id="IPR029063">
    <property type="entry name" value="SAM-dependent_MTases_sf"/>
</dbReference>
<dbReference type="NCBIfam" id="TIGR00740">
    <property type="entry name" value="carboxy-S-adenosyl-L-methionine synthase CmoA"/>
    <property type="match status" value="1"/>
</dbReference>
<dbReference type="NCBIfam" id="NF011995">
    <property type="entry name" value="PRK15451.1"/>
    <property type="match status" value="1"/>
</dbReference>
<dbReference type="PANTHER" id="PTHR43861:SF2">
    <property type="entry name" value="CARBOXY-S-ADENOSYL-L-METHIONINE SYNTHASE"/>
    <property type="match status" value="1"/>
</dbReference>
<dbReference type="PANTHER" id="PTHR43861">
    <property type="entry name" value="TRANS-ACONITATE 2-METHYLTRANSFERASE-RELATED"/>
    <property type="match status" value="1"/>
</dbReference>
<dbReference type="Pfam" id="PF13649">
    <property type="entry name" value="Methyltransf_25"/>
    <property type="match status" value="1"/>
</dbReference>
<dbReference type="PIRSF" id="PIRSF006325">
    <property type="entry name" value="MeTrfase_bac"/>
    <property type="match status" value="1"/>
</dbReference>
<dbReference type="SUPFAM" id="SSF53335">
    <property type="entry name" value="S-adenosyl-L-methionine-dependent methyltransferases"/>
    <property type="match status" value="1"/>
</dbReference>
<reference key="1">
    <citation type="journal article" date="2007" name="Genome Biol.">
        <title>Characterization and modeling of the Haemophilus influenzae core and supragenomes based on the complete genomic sequences of Rd and 12 clinical nontypeable strains.</title>
        <authorList>
            <person name="Hogg J.S."/>
            <person name="Hu F.Z."/>
            <person name="Janto B."/>
            <person name="Boissy R."/>
            <person name="Hayes J."/>
            <person name="Keefe R."/>
            <person name="Post J.C."/>
            <person name="Ehrlich G.D."/>
        </authorList>
    </citation>
    <scope>NUCLEOTIDE SEQUENCE [LARGE SCALE GENOMIC DNA]</scope>
    <source>
        <strain>PittEE</strain>
    </source>
</reference>
<evidence type="ECO:0000255" key="1">
    <source>
        <dbReference type="HAMAP-Rule" id="MF_01589"/>
    </source>
</evidence>
<name>CMOA_HAEIE</name>
<gene>
    <name evidence="1" type="primary">cmoA</name>
    <name type="ordered locus">CGSHiEE_01430</name>
</gene>
<keyword id="KW-0949">S-adenosyl-L-methionine</keyword>
<keyword id="KW-0808">Transferase</keyword>